<keyword id="KW-0903">Direct protein sequencing</keyword>
<keyword id="KW-0342">GTP-binding</keyword>
<keyword id="KW-0547">Nucleotide-binding</keyword>
<keyword id="KW-1185">Reference proteome</keyword>
<keyword id="KW-0677">Repeat</keyword>
<protein>
    <recommendedName>
        <fullName>Rho-related BTB domain-containing protein 1</fullName>
    </recommendedName>
</protein>
<name>RHBT1_MOUSE</name>
<comment type="tissue specificity">
    <text evidence="4">Highest expression in heart and testis.</text>
</comment>
<comment type="similarity">
    <text evidence="5">Belongs to the small GTPase superfamily. Rho family.</text>
</comment>
<dbReference type="EMBL" id="AK005770">
    <property type="protein sequence ID" value="BAB24229.1"/>
    <property type="molecule type" value="mRNA"/>
</dbReference>
<dbReference type="EMBL" id="CH466553">
    <property type="protein sequence ID" value="EDL32000.1"/>
    <property type="molecule type" value="Genomic_DNA"/>
</dbReference>
<dbReference type="EMBL" id="CH466553">
    <property type="protein sequence ID" value="EDL32001.1"/>
    <property type="molecule type" value="Genomic_DNA"/>
</dbReference>
<dbReference type="EMBL" id="CH466553">
    <property type="protein sequence ID" value="EDL32002.1"/>
    <property type="molecule type" value="Genomic_DNA"/>
</dbReference>
<dbReference type="EMBL" id="CH466553">
    <property type="protein sequence ID" value="EDL32003.1"/>
    <property type="molecule type" value="Genomic_DNA"/>
</dbReference>
<dbReference type="EMBL" id="CH466553">
    <property type="protein sequence ID" value="EDL32004.1"/>
    <property type="molecule type" value="Genomic_DNA"/>
</dbReference>
<dbReference type="EMBL" id="BC137646">
    <property type="protein sequence ID" value="AAI37647.1"/>
    <property type="molecule type" value="mRNA"/>
</dbReference>
<dbReference type="EMBL" id="BC137647">
    <property type="protein sequence ID" value="AAI37648.1"/>
    <property type="molecule type" value="mRNA"/>
</dbReference>
<dbReference type="CCDS" id="CCDS35930.1"/>
<dbReference type="RefSeq" id="NP_001074816.1">
    <property type="nucleotide sequence ID" value="NM_001081347.1"/>
</dbReference>
<dbReference type="RefSeq" id="NP_001239565.1">
    <property type="nucleotide sequence ID" value="NM_001252636.1"/>
</dbReference>
<dbReference type="RefSeq" id="NP_001239566.1">
    <property type="nucleotide sequence ID" value="NM_001252637.1"/>
</dbReference>
<dbReference type="RefSeq" id="XP_006514111.1">
    <property type="nucleotide sequence ID" value="XM_006514048.5"/>
</dbReference>
<dbReference type="RefSeq" id="XP_006514112.1">
    <property type="nucleotide sequence ID" value="XM_006514049.5"/>
</dbReference>
<dbReference type="RefSeq" id="XP_006514114.1">
    <property type="nucleotide sequence ID" value="XM_006514051.5"/>
</dbReference>
<dbReference type="RefSeq" id="XP_011241855.1">
    <property type="nucleotide sequence ID" value="XM_011243553.2"/>
</dbReference>
<dbReference type="RefSeq" id="XP_036011875.1">
    <property type="nucleotide sequence ID" value="XM_036155982.1"/>
</dbReference>
<dbReference type="SMR" id="Q9DAK3"/>
<dbReference type="BioGRID" id="213337">
    <property type="interactions" value="5"/>
</dbReference>
<dbReference type="FunCoup" id="Q9DAK3">
    <property type="interactions" value="862"/>
</dbReference>
<dbReference type="STRING" id="10090.ENSMUSP00000065095"/>
<dbReference type="iPTMnet" id="Q9DAK3"/>
<dbReference type="PhosphoSitePlus" id="Q9DAK3"/>
<dbReference type="PaxDb" id="10090-ENSMUSP00000020101"/>
<dbReference type="ProteomicsDB" id="255327"/>
<dbReference type="Antibodypedia" id="14385">
    <property type="antibodies" value="181 antibodies from 28 providers"/>
</dbReference>
<dbReference type="Ensembl" id="ENSMUST00000020101.12">
    <property type="protein sequence ID" value="ENSMUSP00000020101.6"/>
    <property type="gene ID" value="ENSMUSG00000019944.15"/>
</dbReference>
<dbReference type="Ensembl" id="ENSMUST00000067908.14">
    <property type="protein sequence ID" value="ENSMUSP00000065095.8"/>
    <property type="gene ID" value="ENSMUSG00000019944.15"/>
</dbReference>
<dbReference type="Ensembl" id="ENSMUST00000164034.8">
    <property type="protein sequence ID" value="ENSMUSP00000132068.2"/>
    <property type="gene ID" value="ENSMUSG00000019944.15"/>
</dbReference>
<dbReference type="GeneID" id="69288"/>
<dbReference type="KEGG" id="mmu:69288"/>
<dbReference type="UCSC" id="uc007fmp.1">
    <property type="organism name" value="mouse"/>
</dbReference>
<dbReference type="AGR" id="MGI:1916538"/>
<dbReference type="CTD" id="9886"/>
<dbReference type="MGI" id="MGI:1916538">
    <property type="gene designation" value="Rhobtb1"/>
</dbReference>
<dbReference type="VEuPathDB" id="HostDB:ENSMUSG00000019944"/>
<dbReference type="eggNOG" id="KOG0393">
    <property type="taxonomic scope" value="Eukaryota"/>
</dbReference>
<dbReference type="GeneTree" id="ENSGT00940000159995"/>
<dbReference type="HOGENOM" id="CLU_015517_0_0_1"/>
<dbReference type="InParanoid" id="Q9DAK3"/>
<dbReference type="OMA" id="YLDETQC"/>
<dbReference type="OrthoDB" id="6020506at2759"/>
<dbReference type="PhylomeDB" id="Q9DAK3"/>
<dbReference type="TreeFam" id="TF323347"/>
<dbReference type="Reactome" id="R-MMU-9013422">
    <property type="pathway name" value="RHOBTB1 GTPase cycle"/>
</dbReference>
<dbReference type="BioGRID-ORCS" id="69288">
    <property type="hits" value="3 hits in 77 CRISPR screens"/>
</dbReference>
<dbReference type="ChiTaRS" id="Rhobtb1">
    <property type="organism name" value="mouse"/>
</dbReference>
<dbReference type="PRO" id="PR:Q9DAK3"/>
<dbReference type="Proteomes" id="UP000000589">
    <property type="component" value="Chromosome 10"/>
</dbReference>
<dbReference type="RNAct" id="Q9DAK3">
    <property type="molecule type" value="protein"/>
</dbReference>
<dbReference type="Bgee" id="ENSMUSG00000019944">
    <property type="expression patterns" value="Expressed in myocardium of ventricle and 196 other cell types or tissues"/>
</dbReference>
<dbReference type="ExpressionAtlas" id="Q9DAK3">
    <property type="expression patterns" value="baseline and differential"/>
</dbReference>
<dbReference type="GO" id="GO:0005525">
    <property type="term" value="F:GTP binding"/>
    <property type="evidence" value="ECO:0007669"/>
    <property type="project" value="UniProtKB-KW"/>
</dbReference>
<dbReference type="GO" id="GO:0003924">
    <property type="term" value="F:GTPase activity"/>
    <property type="evidence" value="ECO:0007669"/>
    <property type="project" value="InterPro"/>
</dbReference>
<dbReference type="GO" id="GO:0007264">
    <property type="term" value="P:small GTPase-mediated signal transduction"/>
    <property type="evidence" value="ECO:0007669"/>
    <property type="project" value="InterPro"/>
</dbReference>
<dbReference type="CDD" id="cd18530">
    <property type="entry name" value="BACK_RHOBTB1"/>
    <property type="match status" value="1"/>
</dbReference>
<dbReference type="CDD" id="cd01873">
    <property type="entry name" value="RhoBTB"/>
    <property type="match status" value="1"/>
</dbReference>
<dbReference type="FunFam" id="3.30.710.10:FF:000069">
    <property type="entry name" value="Rho related BTB domain containing 1"/>
    <property type="match status" value="2"/>
</dbReference>
<dbReference type="FunFam" id="3.40.50.300:FF:000177">
    <property type="entry name" value="Rho-related BTB domain-containing protein 2"/>
    <property type="match status" value="1"/>
</dbReference>
<dbReference type="FunFam" id="3.30.710.10:FF:000014">
    <property type="entry name" value="Rho-related BTB domain-containing protein 2 isoform 1"/>
    <property type="match status" value="1"/>
</dbReference>
<dbReference type="Gene3D" id="3.40.50.300">
    <property type="entry name" value="P-loop containing nucleotide triphosphate hydrolases"/>
    <property type="match status" value="1"/>
</dbReference>
<dbReference type="Gene3D" id="3.30.710.10">
    <property type="entry name" value="Potassium Channel Kv1.1, Chain A"/>
    <property type="match status" value="2"/>
</dbReference>
<dbReference type="InterPro" id="IPR000210">
    <property type="entry name" value="BTB/POZ_dom"/>
</dbReference>
<dbReference type="InterPro" id="IPR027417">
    <property type="entry name" value="P-loop_NTPase"/>
</dbReference>
<dbReference type="InterPro" id="IPR011333">
    <property type="entry name" value="SKP1/BTB/POZ_sf"/>
</dbReference>
<dbReference type="InterPro" id="IPR005225">
    <property type="entry name" value="Small_GTP-bd"/>
</dbReference>
<dbReference type="InterPro" id="IPR001806">
    <property type="entry name" value="Small_GTPase"/>
</dbReference>
<dbReference type="InterPro" id="IPR003578">
    <property type="entry name" value="Small_GTPase_Rho"/>
</dbReference>
<dbReference type="NCBIfam" id="TIGR00231">
    <property type="entry name" value="small_GTP"/>
    <property type="match status" value="1"/>
</dbReference>
<dbReference type="PANTHER" id="PTHR24072">
    <property type="entry name" value="RHO FAMILY GTPASE"/>
    <property type="match status" value="1"/>
</dbReference>
<dbReference type="Pfam" id="PF00651">
    <property type="entry name" value="BTB"/>
    <property type="match status" value="1"/>
</dbReference>
<dbReference type="Pfam" id="PF00071">
    <property type="entry name" value="Ras"/>
    <property type="match status" value="1"/>
</dbReference>
<dbReference type="PRINTS" id="PR00449">
    <property type="entry name" value="RASTRNSFRMNG"/>
</dbReference>
<dbReference type="SMART" id="SM00225">
    <property type="entry name" value="BTB"/>
    <property type="match status" value="2"/>
</dbReference>
<dbReference type="SMART" id="SM00175">
    <property type="entry name" value="RAB"/>
    <property type="match status" value="1"/>
</dbReference>
<dbReference type="SMART" id="SM00173">
    <property type="entry name" value="RAS"/>
    <property type="match status" value="1"/>
</dbReference>
<dbReference type="SMART" id="SM00174">
    <property type="entry name" value="RHO"/>
    <property type="match status" value="1"/>
</dbReference>
<dbReference type="SUPFAM" id="SSF52540">
    <property type="entry name" value="P-loop containing nucleoside triphosphate hydrolases"/>
    <property type="match status" value="1"/>
</dbReference>
<dbReference type="SUPFAM" id="SSF54695">
    <property type="entry name" value="POZ domain"/>
    <property type="match status" value="2"/>
</dbReference>
<dbReference type="PROSITE" id="PS50097">
    <property type="entry name" value="BTB"/>
    <property type="match status" value="2"/>
</dbReference>
<dbReference type="PROSITE" id="PS51420">
    <property type="entry name" value="RHO"/>
    <property type="match status" value="1"/>
</dbReference>
<proteinExistence type="evidence at protein level"/>
<organism>
    <name type="scientific">Mus musculus</name>
    <name type="common">Mouse</name>
    <dbReference type="NCBI Taxonomy" id="10090"/>
    <lineage>
        <taxon>Eukaryota</taxon>
        <taxon>Metazoa</taxon>
        <taxon>Chordata</taxon>
        <taxon>Craniata</taxon>
        <taxon>Vertebrata</taxon>
        <taxon>Euteleostomi</taxon>
        <taxon>Mammalia</taxon>
        <taxon>Eutheria</taxon>
        <taxon>Euarchontoglires</taxon>
        <taxon>Glires</taxon>
        <taxon>Rodentia</taxon>
        <taxon>Myomorpha</taxon>
        <taxon>Muroidea</taxon>
        <taxon>Muridae</taxon>
        <taxon>Murinae</taxon>
        <taxon>Mus</taxon>
        <taxon>Mus</taxon>
    </lineage>
</organism>
<evidence type="ECO:0000255" key="1"/>
<evidence type="ECO:0000255" key="2">
    <source>
        <dbReference type="PROSITE-ProRule" id="PRU00037"/>
    </source>
</evidence>
<evidence type="ECO:0000256" key="3">
    <source>
        <dbReference type="SAM" id="MobiDB-lite"/>
    </source>
</evidence>
<evidence type="ECO:0000269" key="4">
    <source>
    </source>
</evidence>
<evidence type="ECO:0000305" key="5"/>
<feature type="chain" id="PRO_0000198961" description="Rho-related BTB domain-containing protein 1">
    <location>
        <begin position="1"/>
        <end position="695"/>
    </location>
</feature>
<feature type="domain" description="BTB 1" evidence="2">
    <location>
        <begin position="266"/>
        <end position="426"/>
    </location>
</feature>
<feature type="domain" description="BTB 2" evidence="2">
    <location>
        <begin position="484"/>
        <end position="551"/>
    </location>
</feature>
<feature type="region of interest" description="Rho-like">
    <location>
        <begin position="1"/>
        <end position="210"/>
    </location>
</feature>
<feature type="region of interest" description="Disordered" evidence="3">
    <location>
        <begin position="325"/>
        <end position="351"/>
    </location>
</feature>
<feature type="binding site" evidence="1">
    <location>
        <begin position="21"/>
        <end position="28"/>
    </location>
    <ligand>
        <name>GTP</name>
        <dbReference type="ChEBI" id="CHEBI:37565"/>
    </ligand>
</feature>
<feature type="binding site" evidence="1">
    <location>
        <begin position="84"/>
        <end position="88"/>
    </location>
    <ligand>
        <name>GTP</name>
        <dbReference type="ChEBI" id="CHEBI:37565"/>
    </ligand>
</feature>
<feature type="binding site" evidence="1">
    <location>
        <begin position="140"/>
        <end position="143"/>
    </location>
    <ligand>
        <name>GTP</name>
        <dbReference type="ChEBI" id="CHEBI:37565"/>
    </ligand>
</feature>
<feature type="sequence conflict" description="In Ref. 2; BAB24229." evidence="5" ref="2">
    <original>S</original>
    <variation>Y</variation>
    <location>
        <position position="636"/>
    </location>
</feature>
<gene>
    <name type="primary">Rhobtb1</name>
</gene>
<reference key="1">
    <citation type="journal article" date="2002" name="Gene">
        <title>Genomic organization and expression profile of the small GTPases of the RhoBTB family in human and mouse.</title>
        <authorList>
            <person name="Ramos S."/>
            <person name="Khademi F."/>
            <person name="Somesh B.P."/>
            <person name="Rivero F."/>
        </authorList>
    </citation>
    <scope>NUCLEOTIDE SEQUENCE [MRNA]</scope>
    <scope>TISSUE SPECIFICITY</scope>
</reference>
<reference key="2">
    <citation type="journal article" date="2005" name="Science">
        <title>The transcriptional landscape of the mammalian genome.</title>
        <authorList>
            <person name="Carninci P."/>
            <person name="Kasukawa T."/>
            <person name="Katayama S."/>
            <person name="Gough J."/>
            <person name="Frith M.C."/>
            <person name="Maeda N."/>
            <person name="Oyama R."/>
            <person name="Ravasi T."/>
            <person name="Lenhard B."/>
            <person name="Wells C."/>
            <person name="Kodzius R."/>
            <person name="Shimokawa K."/>
            <person name="Bajic V.B."/>
            <person name="Brenner S.E."/>
            <person name="Batalov S."/>
            <person name="Forrest A.R."/>
            <person name="Zavolan M."/>
            <person name="Davis M.J."/>
            <person name="Wilming L.G."/>
            <person name="Aidinis V."/>
            <person name="Allen J.E."/>
            <person name="Ambesi-Impiombato A."/>
            <person name="Apweiler R."/>
            <person name="Aturaliya R.N."/>
            <person name="Bailey T.L."/>
            <person name="Bansal M."/>
            <person name="Baxter L."/>
            <person name="Beisel K.W."/>
            <person name="Bersano T."/>
            <person name="Bono H."/>
            <person name="Chalk A.M."/>
            <person name="Chiu K.P."/>
            <person name="Choudhary V."/>
            <person name="Christoffels A."/>
            <person name="Clutterbuck D.R."/>
            <person name="Crowe M.L."/>
            <person name="Dalla E."/>
            <person name="Dalrymple B.P."/>
            <person name="de Bono B."/>
            <person name="Della Gatta G."/>
            <person name="di Bernardo D."/>
            <person name="Down T."/>
            <person name="Engstrom P."/>
            <person name="Fagiolini M."/>
            <person name="Faulkner G."/>
            <person name="Fletcher C.F."/>
            <person name="Fukushima T."/>
            <person name="Furuno M."/>
            <person name="Futaki S."/>
            <person name="Gariboldi M."/>
            <person name="Georgii-Hemming P."/>
            <person name="Gingeras T.R."/>
            <person name="Gojobori T."/>
            <person name="Green R.E."/>
            <person name="Gustincich S."/>
            <person name="Harbers M."/>
            <person name="Hayashi Y."/>
            <person name="Hensch T.K."/>
            <person name="Hirokawa N."/>
            <person name="Hill D."/>
            <person name="Huminiecki L."/>
            <person name="Iacono M."/>
            <person name="Ikeo K."/>
            <person name="Iwama A."/>
            <person name="Ishikawa T."/>
            <person name="Jakt M."/>
            <person name="Kanapin A."/>
            <person name="Katoh M."/>
            <person name="Kawasawa Y."/>
            <person name="Kelso J."/>
            <person name="Kitamura H."/>
            <person name="Kitano H."/>
            <person name="Kollias G."/>
            <person name="Krishnan S.P."/>
            <person name="Kruger A."/>
            <person name="Kummerfeld S.K."/>
            <person name="Kurochkin I.V."/>
            <person name="Lareau L.F."/>
            <person name="Lazarevic D."/>
            <person name="Lipovich L."/>
            <person name="Liu J."/>
            <person name="Liuni S."/>
            <person name="McWilliam S."/>
            <person name="Madan Babu M."/>
            <person name="Madera M."/>
            <person name="Marchionni L."/>
            <person name="Matsuda H."/>
            <person name="Matsuzawa S."/>
            <person name="Miki H."/>
            <person name="Mignone F."/>
            <person name="Miyake S."/>
            <person name="Morris K."/>
            <person name="Mottagui-Tabar S."/>
            <person name="Mulder N."/>
            <person name="Nakano N."/>
            <person name="Nakauchi H."/>
            <person name="Ng P."/>
            <person name="Nilsson R."/>
            <person name="Nishiguchi S."/>
            <person name="Nishikawa S."/>
            <person name="Nori F."/>
            <person name="Ohara O."/>
            <person name="Okazaki Y."/>
            <person name="Orlando V."/>
            <person name="Pang K.C."/>
            <person name="Pavan W.J."/>
            <person name="Pavesi G."/>
            <person name="Pesole G."/>
            <person name="Petrovsky N."/>
            <person name="Piazza S."/>
            <person name="Reed J."/>
            <person name="Reid J.F."/>
            <person name="Ring B.Z."/>
            <person name="Ringwald M."/>
            <person name="Rost B."/>
            <person name="Ruan Y."/>
            <person name="Salzberg S.L."/>
            <person name="Sandelin A."/>
            <person name="Schneider C."/>
            <person name="Schoenbach C."/>
            <person name="Sekiguchi K."/>
            <person name="Semple C.A."/>
            <person name="Seno S."/>
            <person name="Sessa L."/>
            <person name="Sheng Y."/>
            <person name="Shibata Y."/>
            <person name="Shimada H."/>
            <person name="Shimada K."/>
            <person name="Silva D."/>
            <person name="Sinclair B."/>
            <person name="Sperling S."/>
            <person name="Stupka E."/>
            <person name="Sugiura K."/>
            <person name="Sultana R."/>
            <person name="Takenaka Y."/>
            <person name="Taki K."/>
            <person name="Tammoja K."/>
            <person name="Tan S.L."/>
            <person name="Tang S."/>
            <person name="Taylor M.S."/>
            <person name="Tegner J."/>
            <person name="Teichmann S.A."/>
            <person name="Ueda H.R."/>
            <person name="van Nimwegen E."/>
            <person name="Verardo R."/>
            <person name="Wei C.L."/>
            <person name="Yagi K."/>
            <person name="Yamanishi H."/>
            <person name="Zabarovsky E."/>
            <person name="Zhu S."/>
            <person name="Zimmer A."/>
            <person name="Hide W."/>
            <person name="Bult C."/>
            <person name="Grimmond S.M."/>
            <person name="Teasdale R.D."/>
            <person name="Liu E.T."/>
            <person name="Brusic V."/>
            <person name="Quackenbush J."/>
            <person name="Wahlestedt C."/>
            <person name="Mattick J.S."/>
            <person name="Hume D.A."/>
            <person name="Kai C."/>
            <person name="Sasaki D."/>
            <person name="Tomaru Y."/>
            <person name="Fukuda S."/>
            <person name="Kanamori-Katayama M."/>
            <person name="Suzuki M."/>
            <person name="Aoki J."/>
            <person name="Arakawa T."/>
            <person name="Iida J."/>
            <person name="Imamura K."/>
            <person name="Itoh M."/>
            <person name="Kato T."/>
            <person name="Kawaji H."/>
            <person name="Kawagashira N."/>
            <person name="Kawashima T."/>
            <person name="Kojima M."/>
            <person name="Kondo S."/>
            <person name="Konno H."/>
            <person name="Nakano K."/>
            <person name="Ninomiya N."/>
            <person name="Nishio T."/>
            <person name="Okada M."/>
            <person name="Plessy C."/>
            <person name="Shibata K."/>
            <person name="Shiraki T."/>
            <person name="Suzuki S."/>
            <person name="Tagami M."/>
            <person name="Waki K."/>
            <person name="Watahiki A."/>
            <person name="Okamura-Oho Y."/>
            <person name="Suzuki H."/>
            <person name="Kawai J."/>
            <person name="Hayashizaki Y."/>
        </authorList>
    </citation>
    <scope>NUCLEOTIDE SEQUENCE [LARGE SCALE MRNA]</scope>
    <source>
        <strain>C57BL/6J</strain>
        <tissue>Testis</tissue>
    </source>
</reference>
<reference key="3">
    <citation type="submission" date="2005-09" db="EMBL/GenBank/DDBJ databases">
        <authorList>
            <person name="Mural R.J."/>
            <person name="Adams M.D."/>
            <person name="Myers E.W."/>
            <person name="Smith H.O."/>
            <person name="Venter J.C."/>
        </authorList>
    </citation>
    <scope>NUCLEOTIDE SEQUENCE [LARGE SCALE GENOMIC DNA]</scope>
</reference>
<reference key="4">
    <citation type="journal article" date="2004" name="Genome Res.">
        <title>The status, quality, and expansion of the NIH full-length cDNA project: the Mammalian Gene Collection (MGC).</title>
        <authorList>
            <consortium name="The MGC Project Team"/>
        </authorList>
    </citation>
    <scope>NUCLEOTIDE SEQUENCE [LARGE SCALE MRNA]</scope>
    <source>
        <tissue>Brain</tissue>
    </source>
</reference>
<reference key="5">
    <citation type="submission" date="2009-01" db="UniProtKB">
        <authorList>
            <person name="Lubec G."/>
            <person name="Sunyer B."/>
            <person name="Chen W.-Q."/>
        </authorList>
    </citation>
    <scope>PROTEIN SEQUENCE OF 401-411</scope>
    <scope>IDENTIFICATION BY MASS SPECTROMETRY</scope>
    <source>
        <strain>OF1</strain>
        <tissue>Hippocampus</tissue>
    </source>
</reference>
<sequence length="695" mass="78819">MDSDMDYERPNVETIKCVVVGDNAVGKTRLICARACNTTLTQYQLLATHVPTVWAIDQYRVCQEVLERSRDVVDEVSISLRLWDTFGDHHKDRRFAYGRSDVVVLCFSIANPNSLNHVKTMWYQEIKHFCPRTPVVLVGCQLDLRYADLEAVNRARRPLARPIKRGDILPPEKGREVAKELGIPYYETSVFDQFGIKDVFDNAIRAALISRRHLQFWKSHLKKVQKPLLQAPFLPPKAPPPVIKVPECPSAGTSDAACLLDNPLCADVLFVLHDEEHIFAHRIYLATSSSKFYDLFLMECEESPCWGGGAGEEVPCRDFQGRTQSLGSAEEGKEGPQRTPQADPGASSGQDLPESLALQMEASGSEGHALSGWSKGFVSMHREVRVNPISKRVGPVTVVRLDPSMQSGPFRTLLRFLYSGQLDEKEKDLLGLAQMAEVLEMFDLRMMVENIMNKEAFMNQEITKAFHVRKANRIKECLSKGTFSDVTFTLDDGAISAHKPLLICSCEWMAAMFGGSFVESANREVHLPNINKMSMQAVLEYLYTKQLSPNLDLDPLELIALANRFCLTHLVALVEQHAVQELTKAAVSGVSIDGEVLSYLELAQFHNANQLAAWCLHHICTNYNSVCSKFRKEIKSKSADNQEYFERHRWPPVWYLKEEDHYQRVKREREKEDLALNKHHSRRKWCFWHSSPAVA</sequence>
<accession>Q9DAK3</accession>
<accession>B2RPX3</accession>